<feature type="chain" id="PRO_0000430792" description="Biflaviolin synthase CYP158A1">
    <location>
        <begin position="1"/>
        <end position="407"/>
    </location>
</feature>
<feature type="region of interest" description="Disordered" evidence="2">
    <location>
        <begin position="1"/>
        <end position="20"/>
    </location>
</feature>
<feature type="compositionally biased region" description="Polar residues" evidence="2">
    <location>
        <begin position="1"/>
        <end position="11"/>
    </location>
</feature>
<feature type="binding site" evidence="3 9">
    <location>
        <position position="92"/>
    </location>
    <ligand>
        <name>flaviolin</name>
        <dbReference type="ChEBI" id="CHEBI:58696"/>
        <label>1</label>
    </ligand>
</feature>
<feature type="binding site" evidence="3 9">
    <location>
        <position position="199"/>
    </location>
    <ligand>
        <name>flaviolin</name>
        <dbReference type="ChEBI" id="CHEBI:58696"/>
        <label>1</label>
    </ligand>
</feature>
<feature type="binding site" evidence="3 9">
    <location>
        <begin position="290"/>
        <end position="291"/>
    </location>
    <ligand>
        <name>flaviolin</name>
        <dbReference type="ChEBI" id="CHEBI:58696"/>
        <label>2</label>
    </ligand>
</feature>
<feature type="binding site" description="axial binding residue" evidence="3 8 9 10">
    <location>
        <position position="356"/>
    </location>
    <ligand>
        <name>heme</name>
        <dbReference type="ChEBI" id="CHEBI:30413"/>
    </ligand>
    <ligandPart>
        <name>Fe</name>
        <dbReference type="ChEBI" id="CHEBI:18248"/>
    </ligandPart>
</feature>
<feature type="site" description="Involved in determining product regiospecificity" evidence="4">
    <location>
        <position position="90"/>
    </location>
</feature>
<feature type="mutagenesis site" description="Normal activity. Reduced affinity for flaviolin." evidence="4">
    <original>K</original>
    <variation>I</variation>
    <location>
        <position position="90"/>
    </location>
</feature>
<feature type="strand" evidence="11">
    <location>
        <begin position="16"/>
        <end position="18"/>
    </location>
</feature>
<feature type="strand" evidence="11">
    <location>
        <begin position="25"/>
        <end position="27"/>
    </location>
</feature>
<feature type="helix" evidence="11">
    <location>
        <begin position="31"/>
        <end position="37"/>
    </location>
</feature>
<feature type="strand" evidence="11">
    <location>
        <begin position="41"/>
        <end position="46"/>
    </location>
</feature>
<feature type="strand" evidence="11">
    <location>
        <begin position="48"/>
        <end position="52"/>
    </location>
</feature>
<feature type="strand" evidence="11">
    <location>
        <begin position="54"/>
        <end position="57"/>
    </location>
</feature>
<feature type="helix" evidence="11">
    <location>
        <begin position="60"/>
        <end position="66"/>
    </location>
</feature>
<feature type="strand" evidence="11">
    <location>
        <begin position="72"/>
        <end position="74"/>
    </location>
</feature>
<feature type="helix" evidence="11">
    <location>
        <begin position="75"/>
        <end position="79"/>
    </location>
</feature>
<feature type="strand" evidence="11">
    <location>
        <begin position="84"/>
        <end position="87"/>
    </location>
</feature>
<feature type="helix" evidence="12">
    <location>
        <begin position="96"/>
        <end position="98"/>
    </location>
</feature>
<feature type="helix" evidence="11">
    <location>
        <begin position="103"/>
        <end position="111"/>
    </location>
</feature>
<feature type="helix" evidence="11">
    <location>
        <begin position="112"/>
        <end position="114"/>
    </location>
</feature>
<feature type="helix" evidence="11">
    <location>
        <begin position="117"/>
        <end position="141"/>
    </location>
</feature>
<feature type="helix" evidence="11">
    <location>
        <begin position="147"/>
        <end position="150"/>
    </location>
</feature>
<feature type="turn" evidence="11">
    <location>
        <begin position="151"/>
        <end position="153"/>
    </location>
</feature>
<feature type="helix" evidence="11">
    <location>
        <begin position="154"/>
        <end position="164"/>
    </location>
</feature>
<feature type="helix" evidence="11">
    <location>
        <begin position="170"/>
        <end position="178"/>
    </location>
</feature>
<feature type="helix" evidence="11">
    <location>
        <begin position="179"/>
        <end position="181"/>
    </location>
</feature>
<feature type="helix" evidence="11">
    <location>
        <begin position="189"/>
        <end position="207"/>
    </location>
</feature>
<feature type="turn" evidence="11">
    <location>
        <begin position="208"/>
        <end position="211"/>
    </location>
</feature>
<feature type="helix" evidence="11">
    <location>
        <begin position="217"/>
        <end position="226"/>
    </location>
</feature>
<feature type="strand" evidence="12">
    <location>
        <begin position="232"/>
        <end position="234"/>
    </location>
</feature>
<feature type="helix" evidence="11">
    <location>
        <begin position="235"/>
        <end position="244"/>
    </location>
</feature>
<feature type="helix" evidence="11">
    <location>
        <begin position="246"/>
        <end position="262"/>
    </location>
</feature>
<feature type="helix" evidence="11">
    <location>
        <begin position="264"/>
        <end position="272"/>
    </location>
</feature>
<feature type="helix" evidence="11">
    <location>
        <begin position="278"/>
        <end position="287"/>
    </location>
</feature>
<feature type="strand" evidence="11">
    <location>
        <begin position="291"/>
        <end position="293"/>
    </location>
</feature>
<feature type="strand" evidence="11">
    <location>
        <begin position="298"/>
        <end position="302"/>
    </location>
</feature>
<feature type="strand" evidence="11">
    <location>
        <begin position="304"/>
        <end position="306"/>
    </location>
</feature>
<feature type="strand" evidence="11">
    <location>
        <begin position="309"/>
        <end position="311"/>
    </location>
</feature>
<feature type="strand" evidence="11">
    <location>
        <begin position="316"/>
        <end position="319"/>
    </location>
</feature>
<feature type="helix" evidence="11">
    <location>
        <begin position="321"/>
        <end position="324"/>
    </location>
</feature>
<feature type="turn" evidence="11">
    <location>
        <begin position="328"/>
        <end position="330"/>
    </location>
</feature>
<feature type="strand" evidence="11">
    <location>
        <begin position="331"/>
        <end position="333"/>
    </location>
</feature>
<feature type="helix" evidence="12">
    <location>
        <begin position="352"/>
        <end position="354"/>
    </location>
</feature>
<feature type="helix" evidence="11">
    <location>
        <begin position="359"/>
        <end position="376"/>
    </location>
</feature>
<feature type="strand" evidence="11">
    <location>
        <begin position="381"/>
        <end position="384"/>
    </location>
</feature>
<feature type="helix" evidence="11">
    <location>
        <begin position="386"/>
        <end position="388"/>
    </location>
</feature>
<feature type="strand" evidence="11">
    <location>
        <begin position="394"/>
        <end position="397"/>
    </location>
</feature>
<feature type="strand" evidence="11">
    <location>
        <begin position="404"/>
        <end position="406"/>
    </location>
</feature>
<protein>
    <recommendedName>
        <fullName evidence="6">Biflaviolin synthase CYP158A1</fullName>
        <ecNumber evidence="3 4">1.14.19.69</ecNumber>
    </recommendedName>
    <alternativeName>
        <fullName evidence="5">Cytochrome P450 158A1</fullName>
        <shortName evidence="5">CYP158A1</shortName>
    </alternativeName>
</protein>
<proteinExistence type="evidence at protein level"/>
<name>C1581_STRCO</name>
<dbReference type="EC" id="1.14.19.69" evidence="3 4"/>
<dbReference type="EMBL" id="AL939130">
    <property type="protein sequence ID" value="CAB88975.1"/>
    <property type="molecule type" value="Genomic_DNA"/>
</dbReference>
<dbReference type="RefSeq" id="NP_631063.1">
    <property type="nucleotide sequence ID" value="NC_003888.3"/>
</dbReference>
<dbReference type="RefSeq" id="WP_011031367.1">
    <property type="nucleotide sequence ID" value="NZ_VNID01000012.1"/>
</dbReference>
<dbReference type="PDB" id="2DKK">
    <property type="method" value="X-ray"/>
    <property type="resolution" value="1.97 A"/>
    <property type="chains" value="A=1-407"/>
</dbReference>
<dbReference type="PDB" id="2NZ5">
    <property type="method" value="X-ray"/>
    <property type="resolution" value="2.35 A"/>
    <property type="chains" value="A/B=1-407"/>
</dbReference>
<dbReference type="PDB" id="2NZA">
    <property type="method" value="X-ray"/>
    <property type="resolution" value="2.90 A"/>
    <property type="chains" value="A/B=1-407"/>
</dbReference>
<dbReference type="PDBsum" id="2DKK"/>
<dbReference type="PDBsum" id="2NZ5"/>
<dbReference type="PDBsum" id="2NZA"/>
<dbReference type="SMR" id="Q9KZF5"/>
<dbReference type="STRING" id="100226.gene:17764658"/>
<dbReference type="PaxDb" id="100226-SCO6998"/>
<dbReference type="KEGG" id="sco:SCO6998"/>
<dbReference type="PATRIC" id="fig|100226.15.peg.7100"/>
<dbReference type="eggNOG" id="COG2124">
    <property type="taxonomic scope" value="Bacteria"/>
</dbReference>
<dbReference type="HOGENOM" id="CLU_033716_1_1_11"/>
<dbReference type="InParanoid" id="Q9KZF5"/>
<dbReference type="OrthoDB" id="141712at2"/>
<dbReference type="PhylomeDB" id="Q9KZF5"/>
<dbReference type="BioCyc" id="MetaCyc:MONOMER-18705"/>
<dbReference type="BRENDA" id="1.14.19.69">
    <property type="organism ID" value="5998"/>
</dbReference>
<dbReference type="EvolutionaryTrace" id="Q9KZF5"/>
<dbReference type="Proteomes" id="UP000001973">
    <property type="component" value="Chromosome"/>
</dbReference>
<dbReference type="GO" id="GO:0020037">
    <property type="term" value="F:heme binding"/>
    <property type="evidence" value="ECO:0000314"/>
    <property type="project" value="UniProtKB"/>
</dbReference>
<dbReference type="GO" id="GO:0005506">
    <property type="term" value="F:iron ion binding"/>
    <property type="evidence" value="ECO:0000314"/>
    <property type="project" value="UniProtKB"/>
</dbReference>
<dbReference type="GO" id="GO:0004497">
    <property type="term" value="F:monooxygenase activity"/>
    <property type="evidence" value="ECO:0000314"/>
    <property type="project" value="UniProtKB"/>
</dbReference>
<dbReference type="GO" id="GO:0016705">
    <property type="term" value="F:oxidoreductase activity, acting on paired donors, with incorporation or reduction of molecular oxygen"/>
    <property type="evidence" value="ECO:0000314"/>
    <property type="project" value="UniProtKB"/>
</dbReference>
<dbReference type="GO" id="GO:0042440">
    <property type="term" value="P:pigment metabolic process"/>
    <property type="evidence" value="ECO:0000314"/>
    <property type="project" value="UniProtKB"/>
</dbReference>
<dbReference type="CDD" id="cd11031">
    <property type="entry name" value="Cyp158A-like"/>
    <property type="match status" value="1"/>
</dbReference>
<dbReference type="FunFam" id="1.10.630.10:FF:000018">
    <property type="entry name" value="Cytochrome P450 monooxygenase"/>
    <property type="match status" value="1"/>
</dbReference>
<dbReference type="Gene3D" id="1.10.630.10">
    <property type="entry name" value="Cytochrome P450"/>
    <property type="match status" value="1"/>
</dbReference>
<dbReference type="InterPro" id="IPR001128">
    <property type="entry name" value="Cyt_P450"/>
</dbReference>
<dbReference type="InterPro" id="IPR002397">
    <property type="entry name" value="Cyt_P450_B"/>
</dbReference>
<dbReference type="InterPro" id="IPR036396">
    <property type="entry name" value="Cyt_P450_sf"/>
</dbReference>
<dbReference type="PANTHER" id="PTHR46696:SF1">
    <property type="entry name" value="CYTOCHROME P450 YJIB-RELATED"/>
    <property type="match status" value="1"/>
</dbReference>
<dbReference type="PANTHER" id="PTHR46696">
    <property type="entry name" value="P450, PUTATIVE (EUROFUNG)-RELATED"/>
    <property type="match status" value="1"/>
</dbReference>
<dbReference type="Pfam" id="PF00067">
    <property type="entry name" value="p450"/>
    <property type="match status" value="1"/>
</dbReference>
<dbReference type="PRINTS" id="PR00359">
    <property type="entry name" value="BP450"/>
</dbReference>
<dbReference type="SUPFAM" id="SSF48264">
    <property type="entry name" value="Cytochrome P450"/>
    <property type="match status" value="1"/>
</dbReference>
<keyword id="KW-0002">3D-structure</keyword>
<keyword id="KW-0349">Heme</keyword>
<keyword id="KW-0408">Iron</keyword>
<keyword id="KW-0479">Metal-binding</keyword>
<keyword id="KW-0503">Monooxygenase</keyword>
<keyword id="KW-0560">Oxidoreductase</keyword>
<keyword id="KW-1185">Reference proteome</keyword>
<reference key="1">
    <citation type="journal article" date="2002" name="Nature">
        <title>Complete genome sequence of the model actinomycete Streptomyces coelicolor A3(2).</title>
        <authorList>
            <person name="Bentley S.D."/>
            <person name="Chater K.F."/>
            <person name="Cerdeno-Tarraga A.-M."/>
            <person name="Challis G.L."/>
            <person name="Thomson N.R."/>
            <person name="James K.D."/>
            <person name="Harris D.E."/>
            <person name="Quail M.A."/>
            <person name="Kieser H."/>
            <person name="Harper D."/>
            <person name="Bateman A."/>
            <person name="Brown S."/>
            <person name="Chandra G."/>
            <person name="Chen C.W."/>
            <person name="Collins M."/>
            <person name="Cronin A."/>
            <person name="Fraser A."/>
            <person name="Goble A."/>
            <person name="Hidalgo J."/>
            <person name="Hornsby T."/>
            <person name="Howarth S."/>
            <person name="Huang C.-H."/>
            <person name="Kieser T."/>
            <person name="Larke L."/>
            <person name="Murphy L.D."/>
            <person name="Oliver K."/>
            <person name="O'Neil S."/>
            <person name="Rabbinowitsch E."/>
            <person name="Rajandream M.A."/>
            <person name="Rutherford K.M."/>
            <person name="Rutter S."/>
            <person name="Seeger K."/>
            <person name="Saunders D."/>
            <person name="Sharp S."/>
            <person name="Squares R."/>
            <person name="Squares S."/>
            <person name="Taylor K."/>
            <person name="Warren T."/>
            <person name="Wietzorrek A."/>
            <person name="Woodward J.R."/>
            <person name="Barrell B.G."/>
            <person name="Parkhill J."/>
            <person name="Hopwood D.A."/>
        </authorList>
    </citation>
    <scope>NUCLEOTIDE SEQUENCE [LARGE SCALE GENOMIC DNA]</scope>
    <source>
        <strain>ATCC BAA-471 / A3(2) / M145</strain>
    </source>
</reference>
<reference key="2">
    <citation type="journal article" date="2012" name="Arch. Biochem. Biophys.">
        <title>The role of Ile87 of CYP158A2 in oxidative coupling reaction.</title>
        <authorList>
            <person name="Zhao B."/>
            <person name="Bellamine A."/>
            <person name="Lei L."/>
            <person name="Waterman M.R."/>
        </authorList>
    </citation>
    <scope>MUTAGENESIS OF LYS-90</scope>
    <scope>BIOPHYSICOCHEMICAL PROPERTIES</scope>
    <scope>CATALYTIC ACTIVITY</scope>
    <scope>REGIOSPECIFICITY SITE</scope>
</reference>
<reference key="3">
    <citation type="journal article" date="2007" name="Biochemistry">
        <title>Different binding modes of two flaviolin substrate molecules in cytochrome P450 158A1 (CYP158A1) compared to CYP158A2.</title>
        <authorList>
            <person name="Zhao B."/>
            <person name="Lamb D.C."/>
            <person name="Lei L."/>
            <person name="Kelly S.L."/>
            <person name="Yuan H."/>
            <person name="Hachey D.L."/>
            <person name="Waterman M.R."/>
        </authorList>
    </citation>
    <scope>X-RAY CRYSTALLOGRAPHY (1.97 ANGSTROMS) IN COMPLEX WITH HEME AND FLAVIOLIN ANALOG</scope>
    <scope>FUNCTION</scope>
    <scope>BIOPHYSICOCHEMICAL PROPERTIES</scope>
    <scope>CATALYTIC ACTIVITY</scope>
</reference>
<gene>
    <name evidence="5" type="primary">cyp158a1</name>
    <name evidence="7" type="ordered locus">SCO6998</name>
</gene>
<evidence type="ECO:0000250" key="1">
    <source>
        <dbReference type="UniProtKB" id="Q9FCA6"/>
    </source>
</evidence>
<evidence type="ECO:0000256" key="2">
    <source>
        <dbReference type="SAM" id="MobiDB-lite"/>
    </source>
</evidence>
<evidence type="ECO:0000269" key="3">
    <source>
    </source>
</evidence>
<evidence type="ECO:0000269" key="4">
    <source>
    </source>
</evidence>
<evidence type="ECO:0000303" key="5">
    <source>
    </source>
</evidence>
<evidence type="ECO:0000305" key="6"/>
<evidence type="ECO:0000312" key="7">
    <source>
        <dbReference type="EMBL" id="CAB88975.1"/>
    </source>
</evidence>
<evidence type="ECO:0007744" key="8">
    <source>
        <dbReference type="PDB" id="2DKK"/>
    </source>
</evidence>
<evidence type="ECO:0007744" key="9">
    <source>
        <dbReference type="PDB" id="2NZ5"/>
    </source>
</evidence>
<evidence type="ECO:0007744" key="10">
    <source>
        <dbReference type="PDB" id="2NZA"/>
    </source>
</evidence>
<evidence type="ECO:0007829" key="11">
    <source>
        <dbReference type="PDB" id="2DKK"/>
    </source>
</evidence>
<evidence type="ECO:0007829" key="12">
    <source>
        <dbReference type="PDB" id="2NZA"/>
    </source>
</evidence>
<accession>Q9KZF5</accession>
<organism>
    <name type="scientific">Streptomyces coelicolor (strain ATCC BAA-471 / A3(2) / M145)</name>
    <dbReference type="NCBI Taxonomy" id="100226"/>
    <lineage>
        <taxon>Bacteria</taxon>
        <taxon>Bacillati</taxon>
        <taxon>Actinomycetota</taxon>
        <taxon>Actinomycetes</taxon>
        <taxon>Kitasatosporales</taxon>
        <taxon>Streptomycetaceae</taxon>
        <taxon>Streptomyces</taxon>
        <taxon>Streptomyces albidoflavus group</taxon>
    </lineage>
</organism>
<comment type="function">
    <text evidence="3">Catalyzes oxidative C-C coupling reaction to polymerize flaviolin and form highly conjugated pigments which protect the soil bacterium from deleterious effects of UV irradiation (two isomers of biflaviolin and one triflaviolin).</text>
</comment>
<comment type="catalytic activity">
    <reaction evidence="3 4">
        <text>2 flaviolin + 2 reduced [2Fe-2S]-[ferredoxin] + O2 + H(+) = 3,3'-biflaviolin + 2 oxidized [2Fe-2S]-[ferredoxin] + 2 H2O</text>
        <dbReference type="Rhea" id="RHEA:26031"/>
        <dbReference type="Rhea" id="RHEA-COMP:10000"/>
        <dbReference type="Rhea" id="RHEA-COMP:10001"/>
        <dbReference type="ChEBI" id="CHEBI:15377"/>
        <dbReference type="ChEBI" id="CHEBI:15378"/>
        <dbReference type="ChEBI" id="CHEBI:15379"/>
        <dbReference type="ChEBI" id="CHEBI:33737"/>
        <dbReference type="ChEBI" id="CHEBI:33738"/>
        <dbReference type="ChEBI" id="CHEBI:58696"/>
        <dbReference type="ChEBI" id="CHEBI:77877"/>
        <dbReference type="EC" id="1.14.19.69"/>
    </reaction>
</comment>
<comment type="catalytic activity">
    <reaction evidence="3 4">
        <text>2 flaviolin + 2 reduced [2Fe-2S]-[ferredoxin] + O2 + H(+) = 3,8'-biflaviolin + 2 oxidized [2Fe-2S]-[ferredoxin] + 2 H2O</text>
        <dbReference type="Rhea" id="RHEA:26035"/>
        <dbReference type="Rhea" id="RHEA-COMP:10000"/>
        <dbReference type="Rhea" id="RHEA-COMP:10001"/>
        <dbReference type="ChEBI" id="CHEBI:15377"/>
        <dbReference type="ChEBI" id="CHEBI:15378"/>
        <dbReference type="ChEBI" id="CHEBI:15379"/>
        <dbReference type="ChEBI" id="CHEBI:33737"/>
        <dbReference type="ChEBI" id="CHEBI:33738"/>
        <dbReference type="ChEBI" id="CHEBI:58696"/>
        <dbReference type="ChEBI" id="CHEBI:77840"/>
        <dbReference type="EC" id="1.14.19.69"/>
    </reaction>
</comment>
<comment type="cofactor">
    <cofactor evidence="3">
        <name>heme</name>
        <dbReference type="ChEBI" id="CHEBI:30413"/>
    </cofactor>
</comment>
<comment type="biophysicochemical properties">
    <kinetics>
        <KM evidence="4">10.5 uM for flaviolin (at pH 8.2 and 37 degrees Celsius)</KM>
        <text evidence="3">kcat is 0.9 min(-1) with flaviolin as substrate (at pH 8.2 and 37 degrees Celsius).</text>
    </kinetics>
</comment>
<comment type="pathway">
    <text evidence="5">Pigment biosynthesis.</text>
</comment>
<comment type="miscellaneous">
    <text evidence="1">The structural studies suggest catalysis likely occurs through proton relay via a 'proton wire' formed by water molecules in the active site.</text>
</comment>
<comment type="similarity">
    <text evidence="6">Belongs to the cytochrome P450 family.</text>
</comment>
<sequence>MTQETTTLTGQSPPPVRDWPALDLDGPEFDPVLAELMREGPLTRVRLPHGEGWAWLATRYDDVKAITNDPRFGRAEVTQRQITRLAPHFKPRPGSLAFADQPDHNRLRRAVAGAFTVGATKRLRPRAQEILDGLVDGILAEGPPADLVERVLEPFPIAVVSEVMGVPAADRERVHSWTRQIISTSGGAEAAERAKRGLYGWITETVRARAGSEGGDVYSMLGAAVGRGEVGETEAVGLAGPLQIGGEAVTHNVGQMLYLLLTRRELMARMRERPGARGTALDELLRWISHRTSVGLARIALEDVEVHGTRIAAGEPVYVSYLAANRDPDVFPDPDRIDLDRDPNPHLAYGNGHHFCTGAVLARMQTELLVDTLLERLPGLRLAVPAEQVAWRRKTMIRGPRTLPCTW</sequence>